<comment type="catalytic activity">
    <reaction evidence="1">
        <text>tRNA(Cys) + L-cysteine + ATP = L-cysteinyl-tRNA(Cys) + AMP + diphosphate</text>
        <dbReference type="Rhea" id="RHEA:17773"/>
        <dbReference type="Rhea" id="RHEA-COMP:9661"/>
        <dbReference type="Rhea" id="RHEA-COMP:9679"/>
        <dbReference type="ChEBI" id="CHEBI:30616"/>
        <dbReference type="ChEBI" id="CHEBI:33019"/>
        <dbReference type="ChEBI" id="CHEBI:35235"/>
        <dbReference type="ChEBI" id="CHEBI:78442"/>
        <dbReference type="ChEBI" id="CHEBI:78517"/>
        <dbReference type="ChEBI" id="CHEBI:456215"/>
        <dbReference type="EC" id="6.1.1.16"/>
    </reaction>
</comment>
<comment type="cofactor">
    <cofactor evidence="1">
        <name>Zn(2+)</name>
        <dbReference type="ChEBI" id="CHEBI:29105"/>
    </cofactor>
    <text evidence="1">Binds 1 zinc ion per subunit.</text>
</comment>
<comment type="subunit">
    <text evidence="1">Monomer.</text>
</comment>
<comment type="subcellular location">
    <subcellularLocation>
        <location evidence="1">Cytoplasm</location>
    </subcellularLocation>
</comment>
<comment type="similarity">
    <text evidence="1">Belongs to the class-I aminoacyl-tRNA synthetase family.</text>
</comment>
<dbReference type="EC" id="6.1.1.16" evidence="1"/>
<dbReference type="EMBL" id="AP009152">
    <property type="protein sequence ID" value="BAG30216.1"/>
    <property type="molecule type" value="Genomic_DNA"/>
</dbReference>
<dbReference type="RefSeq" id="WP_012398937.1">
    <property type="nucleotide sequence ID" value="NC_010617.1"/>
</dbReference>
<dbReference type="SMR" id="B2GFS8"/>
<dbReference type="STRING" id="378753.KRH_18690"/>
<dbReference type="KEGG" id="krh:KRH_18690"/>
<dbReference type="eggNOG" id="COG0215">
    <property type="taxonomic scope" value="Bacteria"/>
</dbReference>
<dbReference type="HOGENOM" id="CLU_013528_0_1_11"/>
<dbReference type="OrthoDB" id="9815130at2"/>
<dbReference type="Proteomes" id="UP000008838">
    <property type="component" value="Chromosome"/>
</dbReference>
<dbReference type="GO" id="GO:0005829">
    <property type="term" value="C:cytosol"/>
    <property type="evidence" value="ECO:0007669"/>
    <property type="project" value="TreeGrafter"/>
</dbReference>
<dbReference type="GO" id="GO:0005524">
    <property type="term" value="F:ATP binding"/>
    <property type="evidence" value="ECO:0007669"/>
    <property type="project" value="UniProtKB-UniRule"/>
</dbReference>
<dbReference type="GO" id="GO:0004817">
    <property type="term" value="F:cysteine-tRNA ligase activity"/>
    <property type="evidence" value="ECO:0007669"/>
    <property type="project" value="UniProtKB-UniRule"/>
</dbReference>
<dbReference type="GO" id="GO:0008270">
    <property type="term" value="F:zinc ion binding"/>
    <property type="evidence" value="ECO:0007669"/>
    <property type="project" value="UniProtKB-UniRule"/>
</dbReference>
<dbReference type="GO" id="GO:0006423">
    <property type="term" value="P:cysteinyl-tRNA aminoacylation"/>
    <property type="evidence" value="ECO:0007669"/>
    <property type="project" value="UniProtKB-UniRule"/>
</dbReference>
<dbReference type="CDD" id="cd00672">
    <property type="entry name" value="CysRS_core"/>
    <property type="match status" value="1"/>
</dbReference>
<dbReference type="FunFam" id="3.40.50.620:FF:000068">
    <property type="entry name" value="Cysteine--tRNA ligase"/>
    <property type="match status" value="1"/>
</dbReference>
<dbReference type="Gene3D" id="1.20.120.1910">
    <property type="entry name" value="Cysteine-tRNA ligase, C-terminal anti-codon recognition domain"/>
    <property type="match status" value="1"/>
</dbReference>
<dbReference type="Gene3D" id="3.40.50.620">
    <property type="entry name" value="HUPs"/>
    <property type="match status" value="1"/>
</dbReference>
<dbReference type="HAMAP" id="MF_00041">
    <property type="entry name" value="Cys_tRNA_synth"/>
    <property type="match status" value="1"/>
</dbReference>
<dbReference type="InterPro" id="IPR015803">
    <property type="entry name" value="Cys-tRNA-ligase"/>
</dbReference>
<dbReference type="InterPro" id="IPR015273">
    <property type="entry name" value="Cys-tRNA-synt_Ia_DALR"/>
</dbReference>
<dbReference type="InterPro" id="IPR024909">
    <property type="entry name" value="Cys-tRNA/MSH_ligase"/>
</dbReference>
<dbReference type="InterPro" id="IPR056411">
    <property type="entry name" value="CysS_C"/>
</dbReference>
<dbReference type="InterPro" id="IPR014729">
    <property type="entry name" value="Rossmann-like_a/b/a_fold"/>
</dbReference>
<dbReference type="InterPro" id="IPR032678">
    <property type="entry name" value="tRNA-synt_1_cat_dom"/>
</dbReference>
<dbReference type="InterPro" id="IPR009080">
    <property type="entry name" value="tRNAsynth_Ia_anticodon-bd"/>
</dbReference>
<dbReference type="NCBIfam" id="TIGR00435">
    <property type="entry name" value="cysS"/>
    <property type="match status" value="1"/>
</dbReference>
<dbReference type="PANTHER" id="PTHR10890:SF30">
    <property type="entry name" value="CYSTEINE--TRNA LIGASE"/>
    <property type="match status" value="1"/>
</dbReference>
<dbReference type="PANTHER" id="PTHR10890">
    <property type="entry name" value="CYSTEINYL-TRNA SYNTHETASE"/>
    <property type="match status" value="1"/>
</dbReference>
<dbReference type="Pfam" id="PF23493">
    <property type="entry name" value="CysS_C"/>
    <property type="match status" value="1"/>
</dbReference>
<dbReference type="Pfam" id="PF09190">
    <property type="entry name" value="DALR_2"/>
    <property type="match status" value="1"/>
</dbReference>
<dbReference type="Pfam" id="PF01406">
    <property type="entry name" value="tRNA-synt_1e"/>
    <property type="match status" value="1"/>
</dbReference>
<dbReference type="PRINTS" id="PR00983">
    <property type="entry name" value="TRNASYNTHCYS"/>
</dbReference>
<dbReference type="SMART" id="SM00840">
    <property type="entry name" value="DALR_2"/>
    <property type="match status" value="1"/>
</dbReference>
<dbReference type="SUPFAM" id="SSF47323">
    <property type="entry name" value="Anticodon-binding domain of a subclass of class I aminoacyl-tRNA synthetases"/>
    <property type="match status" value="1"/>
</dbReference>
<dbReference type="SUPFAM" id="SSF52374">
    <property type="entry name" value="Nucleotidylyl transferase"/>
    <property type="match status" value="1"/>
</dbReference>
<protein>
    <recommendedName>
        <fullName evidence="1">Cysteine--tRNA ligase</fullName>
        <ecNumber evidence="1">6.1.1.16</ecNumber>
    </recommendedName>
    <alternativeName>
        <fullName evidence="1">Cysteinyl-tRNA synthetase</fullName>
        <shortName evidence="1">CysRS</shortName>
    </alternativeName>
</protein>
<organism>
    <name type="scientific">Kocuria rhizophila (strain ATCC 9341 / DSM 348 / NBRC 103217 / DC2201)</name>
    <dbReference type="NCBI Taxonomy" id="378753"/>
    <lineage>
        <taxon>Bacteria</taxon>
        <taxon>Bacillati</taxon>
        <taxon>Actinomycetota</taxon>
        <taxon>Actinomycetes</taxon>
        <taxon>Micrococcales</taxon>
        <taxon>Micrococcaceae</taxon>
        <taxon>Kocuria</taxon>
    </lineage>
</organism>
<keyword id="KW-0030">Aminoacyl-tRNA synthetase</keyword>
<keyword id="KW-0067">ATP-binding</keyword>
<keyword id="KW-0963">Cytoplasm</keyword>
<keyword id="KW-0436">Ligase</keyword>
<keyword id="KW-0479">Metal-binding</keyword>
<keyword id="KW-0547">Nucleotide-binding</keyword>
<keyword id="KW-0648">Protein biosynthesis</keyword>
<keyword id="KW-1185">Reference proteome</keyword>
<keyword id="KW-0862">Zinc</keyword>
<name>SYC_KOCRD</name>
<reference key="1">
    <citation type="journal article" date="2008" name="J. Bacteriol.">
        <title>Complete genome sequence of the soil actinomycete Kocuria rhizophila.</title>
        <authorList>
            <person name="Takarada H."/>
            <person name="Sekine M."/>
            <person name="Kosugi H."/>
            <person name="Matsuo Y."/>
            <person name="Fujisawa T."/>
            <person name="Omata S."/>
            <person name="Kishi E."/>
            <person name="Shimizu A."/>
            <person name="Tsukatani N."/>
            <person name="Tanikawa S."/>
            <person name="Fujita N."/>
            <person name="Harayama S."/>
        </authorList>
    </citation>
    <scope>NUCLEOTIDE SEQUENCE [LARGE SCALE GENOMIC DNA]</scope>
    <source>
        <strain>ATCC 9341 / DSM 348 / NBRC 103217 / DC2201</strain>
    </source>
</reference>
<gene>
    <name evidence="1" type="primary">cysS</name>
    <name type="ordered locus">KRH_18690</name>
</gene>
<feature type="chain" id="PRO_1000090848" description="Cysteine--tRNA ligase">
    <location>
        <begin position="1"/>
        <end position="479"/>
    </location>
</feature>
<feature type="region of interest" description="Disordered" evidence="2">
    <location>
        <begin position="171"/>
        <end position="197"/>
    </location>
</feature>
<feature type="short sequence motif" description="'HIGH' region">
    <location>
        <begin position="31"/>
        <end position="41"/>
    </location>
</feature>
<feature type="short sequence motif" description="'KMSKS' region">
    <location>
        <begin position="280"/>
        <end position="284"/>
    </location>
</feature>
<feature type="compositionally biased region" description="Basic and acidic residues" evidence="2">
    <location>
        <begin position="182"/>
        <end position="197"/>
    </location>
</feature>
<feature type="binding site" evidence="1">
    <location>
        <position position="29"/>
    </location>
    <ligand>
        <name>Zn(2+)</name>
        <dbReference type="ChEBI" id="CHEBI:29105"/>
    </ligand>
</feature>
<feature type="binding site" evidence="1">
    <location>
        <position position="224"/>
    </location>
    <ligand>
        <name>Zn(2+)</name>
        <dbReference type="ChEBI" id="CHEBI:29105"/>
    </ligand>
</feature>
<feature type="binding site" evidence="1">
    <location>
        <position position="249"/>
    </location>
    <ligand>
        <name>Zn(2+)</name>
        <dbReference type="ChEBI" id="CHEBI:29105"/>
    </ligand>
</feature>
<feature type="binding site" evidence="1">
    <location>
        <position position="253"/>
    </location>
    <ligand>
        <name>Zn(2+)</name>
        <dbReference type="ChEBI" id="CHEBI:29105"/>
    </ligand>
</feature>
<feature type="binding site" evidence="1">
    <location>
        <position position="283"/>
    </location>
    <ligand>
        <name>ATP</name>
        <dbReference type="ChEBI" id="CHEBI:30616"/>
    </ligand>
</feature>
<sequence>MTLRFYDTASATIKDFVPVHPGEARLYYCGATVQGAPHIGHVRSALVFDVLARWLRFRGLEVTTVRNVTDIDDKILVNSRASYEQDYSGDHAREPWWALAYRFEGVFGQAYAALGIDRPTYEPRATGHVPEMHALIQELIDAGHAYPATDGSGDVYFDVRSWPRYGELTRQRVEDMQDAPDADPRGKRDPRDFALWKGRKEDEPLSASWDSPWGRGRPGWHLECSAMAGKYLGAHFDIHGGGLDLRFPHHENELAQSTAAGREFANFWLHNGLVTYEGEKMSKSIGNTVSPQDMLREARPLAVRYYLGQAHYRSVLDYRPTSLQEATAAVERVEAVLVAARAAGLGLDRDTQDVPAEFVAVMDDDLNVPRALAVLHETVRAANSALATGDHDAARPLVAAVAGMSDVLGLLQLMDLEGAGAGGAEHRALDVLVQDLLAQRAAARTARDWASADRIRDQLAAAGVVVKDGAQGSAWSVES</sequence>
<accession>B2GFS8</accession>
<proteinExistence type="inferred from homology"/>
<evidence type="ECO:0000255" key="1">
    <source>
        <dbReference type="HAMAP-Rule" id="MF_00041"/>
    </source>
</evidence>
<evidence type="ECO:0000256" key="2">
    <source>
        <dbReference type="SAM" id="MobiDB-lite"/>
    </source>
</evidence>